<organism>
    <name type="scientific">Orgyia pseudotsugata multicapsid polyhedrosis virus</name>
    <name type="common">OpMNPV</name>
    <dbReference type="NCBI Taxonomy" id="262177"/>
    <lineage>
        <taxon>Viruses</taxon>
        <taxon>Viruses incertae sedis</taxon>
        <taxon>Naldaviricetes</taxon>
        <taxon>Lefavirales</taxon>
        <taxon>Baculoviridae</taxon>
        <taxon>Alphabaculovirus</taxon>
        <taxon>Alphabaculovirus orpseudotsugatae</taxon>
    </lineage>
</organism>
<proteinExistence type="predicted"/>
<accession>O10348</accession>
<reference key="1">
    <citation type="journal article" date="1997" name="Virology">
        <title>The sequence of the Orgyia pseudotsugata multinucleocapsid nuclear polyhedrosis virus genome.</title>
        <authorList>
            <person name="Ahrens C.H."/>
            <person name="Russell R.R."/>
            <person name="Funk C.J."/>
            <person name="Evans J."/>
            <person name="Harwood S."/>
            <person name="Rohrmann G.F."/>
        </authorList>
    </citation>
    <scope>NUCLEOTIDE SEQUENCE [LARGE SCALE GENOMIC DNA]</scope>
</reference>
<keyword id="KW-1185">Reference proteome</keyword>
<gene>
    <name type="ORF">ORF109</name>
</gene>
<sequence length="390" mass="44258">MECPFQIKVCVSDRFFAFPYNLVEPQTAVGNRPTENLVVYVPTDADVLYVEKRNFPRFRSVLVYKHEQDYNGNSQSPKKTGAATIVYWNPLVPITEIGAGETRVFSVLLTNNLFYCNTLIVHHENPTCPIEFTYPGLEMQPVCKLLSGARKSVDMRAHAPPLSYSELRPINCELPLAHFKELTESDKFLLCFNLETPTMVKILCLKRIFCIFQYRKLPARYVINLPHEEVDSLYNKLNWARTRRLLRGDIPSNCATVNRASLQYVKDAQTLLHIAKCSQTIVEFVRIFQQLIFPYQIVPIVIVKLNSLNAKSGQTAHENRVRVFCKNDSVAITTAGCVPVNMPDAAPASTFDNTEFDDVAHLKQVANRVAVDGVFTSGVVVHAVRYNYFL</sequence>
<organismHost>
    <name type="scientific">Orgyia pseudotsugata</name>
    <name type="common">Douglas-fir tussock moth</name>
    <dbReference type="NCBI Taxonomy" id="33414"/>
</organismHost>
<feature type="chain" id="PRO_0000133044" description="Uncharacterized 44.3 kDa protein">
    <location>
        <begin position="1"/>
        <end position="390"/>
    </location>
</feature>
<dbReference type="EMBL" id="U75930">
    <property type="protein sequence ID" value="AAC59108.1"/>
    <property type="molecule type" value="Genomic_DNA"/>
</dbReference>
<dbReference type="RefSeq" id="NP_046265.1">
    <property type="nucleotide sequence ID" value="NC_001875.2"/>
</dbReference>
<dbReference type="SMR" id="O10348"/>
<dbReference type="KEGG" id="vg:912038"/>
<dbReference type="OrthoDB" id="5447at10239"/>
<dbReference type="Proteomes" id="UP000009248">
    <property type="component" value="Genome"/>
</dbReference>
<dbReference type="InterPro" id="IPR007748">
    <property type="entry name" value="AcMNPV_Orf109"/>
</dbReference>
<dbReference type="Pfam" id="PF05054">
    <property type="entry name" value="AcMNPV_Ac109"/>
    <property type="match status" value="1"/>
</dbReference>
<name>Y109_NPVOP</name>
<protein>
    <recommendedName>
        <fullName>Uncharacterized 44.3 kDa protein</fullName>
    </recommendedName>
</protein>